<gene>
    <name evidence="1" type="primary">rpmD</name>
    <name type="ordered locus">Tpet_1310</name>
</gene>
<dbReference type="EMBL" id="CP000702">
    <property type="protein sequence ID" value="ABQ47324.1"/>
    <property type="molecule type" value="Genomic_DNA"/>
</dbReference>
<dbReference type="RefSeq" id="WP_011943795.1">
    <property type="nucleotide sequence ID" value="NC_009486.1"/>
</dbReference>
<dbReference type="SMR" id="A5IMA1"/>
<dbReference type="STRING" id="390874.Tpet_1310"/>
<dbReference type="KEGG" id="tpt:Tpet_1310"/>
<dbReference type="eggNOG" id="COG1841">
    <property type="taxonomic scope" value="Bacteria"/>
</dbReference>
<dbReference type="HOGENOM" id="CLU_131047_2_1_0"/>
<dbReference type="Proteomes" id="UP000006558">
    <property type="component" value="Chromosome"/>
</dbReference>
<dbReference type="GO" id="GO:0022625">
    <property type="term" value="C:cytosolic large ribosomal subunit"/>
    <property type="evidence" value="ECO:0007669"/>
    <property type="project" value="TreeGrafter"/>
</dbReference>
<dbReference type="GO" id="GO:0003735">
    <property type="term" value="F:structural constituent of ribosome"/>
    <property type="evidence" value="ECO:0007669"/>
    <property type="project" value="InterPro"/>
</dbReference>
<dbReference type="GO" id="GO:0006412">
    <property type="term" value="P:translation"/>
    <property type="evidence" value="ECO:0007669"/>
    <property type="project" value="UniProtKB-UniRule"/>
</dbReference>
<dbReference type="CDD" id="cd01658">
    <property type="entry name" value="Ribosomal_L30"/>
    <property type="match status" value="1"/>
</dbReference>
<dbReference type="FunFam" id="3.30.1390.20:FF:000001">
    <property type="entry name" value="50S ribosomal protein L30"/>
    <property type="match status" value="1"/>
</dbReference>
<dbReference type="Gene3D" id="3.30.1390.20">
    <property type="entry name" value="Ribosomal protein L30, ferredoxin-like fold domain"/>
    <property type="match status" value="1"/>
</dbReference>
<dbReference type="HAMAP" id="MF_01371_B">
    <property type="entry name" value="Ribosomal_uL30_B"/>
    <property type="match status" value="1"/>
</dbReference>
<dbReference type="InterPro" id="IPR036919">
    <property type="entry name" value="Ribo_uL30_ferredoxin-like_sf"/>
</dbReference>
<dbReference type="InterPro" id="IPR005996">
    <property type="entry name" value="Ribosomal_uL30_bac-type"/>
</dbReference>
<dbReference type="InterPro" id="IPR018038">
    <property type="entry name" value="Ribosomal_uL30_CS"/>
</dbReference>
<dbReference type="InterPro" id="IPR016082">
    <property type="entry name" value="Ribosomal_uL30_ferredoxin-like"/>
</dbReference>
<dbReference type="NCBIfam" id="TIGR01308">
    <property type="entry name" value="rpmD_bact"/>
    <property type="match status" value="1"/>
</dbReference>
<dbReference type="PANTHER" id="PTHR15892:SF2">
    <property type="entry name" value="LARGE RIBOSOMAL SUBUNIT PROTEIN UL30M"/>
    <property type="match status" value="1"/>
</dbReference>
<dbReference type="PANTHER" id="PTHR15892">
    <property type="entry name" value="MITOCHONDRIAL RIBOSOMAL PROTEIN L30"/>
    <property type="match status" value="1"/>
</dbReference>
<dbReference type="Pfam" id="PF00327">
    <property type="entry name" value="Ribosomal_L30"/>
    <property type="match status" value="1"/>
</dbReference>
<dbReference type="PIRSF" id="PIRSF002211">
    <property type="entry name" value="Ribosomal_L30_bac-type"/>
    <property type="match status" value="1"/>
</dbReference>
<dbReference type="SUPFAM" id="SSF55129">
    <property type="entry name" value="Ribosomal protein L30p/L7e"/>
    <property type="match status" value="1"/>
</dbReference>
<dbReference type="PROSITE" id="PS00634">
    <property type="entry name" value="RIBOSOMAL_L30"/>
    <property type="match status" value="1"/>
</dbReference>
<reference key="1">
    <citation type="submission" date="2007-05" db="EMBL/GenBank/DDBJ databases">
        <title>Complete sequence of Thermotoga petrophila RKU-1.</title>
        <authorList>
            <consortium name="US DOE Joint Genome Institute"/>
            <person name="Copeland A."/>
            <person name="Lucas S."/>
            <person name="Lapidus A."/>
            <person name="Barry K."/>
            <person name="Glavina del Rio T."/>
            <person name="Dalin E."/>
            <person name="Tice H."/>
            <person name="Pitluck S."/>
            <person name="Sims D."/>
            <person name="Brettin T."/>
            <person name="Bruce D."/>
            <person name="Detter J.C."/>
            <person name="Han C."/>
            <person name="Tapia R."/>
            <person name="Schmutz J."/>
            <person name="Larimer F."/>
            <person name="Land M."/>
            <person name="Hauser L."/>
            <person name="Kyrpides N."/>
            <person name="Mikhailova N."/>
            <person name="Nelson K."/>
            <person name="Gogarten J.P."/>
            <person name="Noll K."/>
            <person name="Richardson P."/>
        </authorList>
    </citation>
    <scope>NUCLEOTIDE SEQUENCE [LARGE SCALE GENOMIC DNA]</scope>
    <source>
        <strain>ATCC BAA-488 / DSM 13995 / JCM 10881 / RKU-1</strain>
    </source>
</reference>
<keyword id="KW-0687">Ribonucleoprotein</keyword>
<keyword id="KW-0689">Ribosomal protein</keyword>
<accession>A5IMA1</accession>
<name>RL30_THEP1</name>
<sequence length="67" mass="7723">MPKKLKIKLVKSPIGYSWDQKDTVKRLGLRKLNQIVVKDDLPQIRGMIRKVRHLVEVEEIEEGGSNA</sequence>
<comment type="subunit">
    <text evidence="1">Part of the 50S ribosomal subunit.</text>
</comment>
<comment type="similarity">
    <text evidence="1">Belongs to the universal ribosomal protein uL30 family.</text>
</comment>
<feature type="chain" id="PRO_1000056125" description="Large ribosomal subunit protein uL30">
    <location>
        <begin position="1"/>
        <end position="67"/>
    </location>
</feature>
<organism>
    <name type="scientific">Thermotoga petrophila (strain ATCC BAA-488 / DSM 13995 / JCM 10881 / RKU-1)</name>
    <dbReference type="NCBI Taxonomy" id="390874"/>
    <lineage>
        <taxon>Bacteria</taxon>
        <taxon>Thermotogati</taxon>
        <taxon>Thermotogota</taxon>
        <taxon>Thermotogae</taxon>
        <taxon>Thermotogales</taxon>
        <taxon>Thermotogaceae</taxon>
        <taxon>Thermotoga</taxon>
    </lineage>
</organism>
<evidence type="ECO:0000255" key="1">
    <source>
        <dbReference type="HAMAP-Rule" id="MF_01371"/>
    </source>
</evidence>
<evidence type="ECO:0000305" key="2"/>
<protein>
    <recommendedName>
        <fullName evidence="1">Large ribosomal subunit protein uL30</fullName>
    </recommendedName>
    <alternativeName>
        <fullName evidence="2">50S ribosomal protein L30</fullName>
    </alternativeName>
</protein>
<proteinExistence type="inferred from homology"/>